<organism>
    <name type="scientific">Arabidopsis thaliana</name>
    <name type="common">Mouse-ear cress</name>
    <dbReference type="NCBI Taxonomy" id="3702"/>
    <lineage>
        <taxon>Eukaryota</taxon>
        <taxon>Viridiplantae</taxon>
        <taxon>Streptophyta</taxon>
        <taxon>Embryophyta</taxon>
        <taxon>Tracheophyta</taxon>
        <taxon>Spermatophyta</taxon>
        <taxon>Magnoliopsida</taxon>
        <taxon>eudicotyledons</taxon>
        <taxon>Gunneridae</taxon>
        <taxon>Pentapetalae</taxon>
        <taxon>rosids</taxon>
        <taxon>malvids</taxon>
        <taxon>Brassicales</taxon>
        <taxon>Brassicaceae</taxon>
        <taxon>Camelineae</taxon>
        <taxon>Arabidopsis</taxon>
    </lineage>
</organism>
<protein>
    <recommendedName>
        <fullName>WAT1-related protein At1g70260</fullName>
    </recommendedName>
</protein>
<name>WTR11_ARATH</name>
<gene>
    <name type="ordered locus">At1g70260</name>
    <name type="ORF">F20P5.1</name>
    <name type="ORF">F20P5.2</name>
</gene>
<evidence type="ECO:0000250" key="1"/>
<evidence type="ECO:0000255" key="2"/>
<evidence type="ECO:0000256" key="3">
    <source>
        <dbReference type="SAM" id="MobiDB-lite"/>
    </source>
</evidence>
<evidence type="ECO:0000305" key="4"/>
<comment type="subcellular location">
    <subcellularLocation>
        <location evidence="1">Membrane</location>
        <topology evidence="4">Multi-pass membrane protein</topology>
    </subcellularLocation>
</comment>
<comment type="similarity">
    <text evidence="4">Belongs to the drug/metabolite transporter (DMT) superfamily. Plant drug/metabolite exporter (P-DME) (TC 2.A.7.4) family.</text>
</comment>
<comment type="sequence caution" evidence="4">
    <conflict type="erroneous gene model prediction">
        <sequence resource="EMBL-CDS" id="AAB61090"/>
    </conflict>
</comment>
<comment type="sequence caution" evidence="4">
    <conflict type="erroneous gene model prediction">
        <sequence resource="EMBL-CDS" id="AAB61091"/>
    </conflict>
</comment>
<comment type="sequence caution" evidence="4">
    <conflict type="frameshift">
        <sequence resource="EMBL" id="BX815890"/>
    </conflict>
</comment>
<reference key="1">
    <citation type="journal article" date="2000" name="Nature">
        <title>Sequence and analysis of chromosome 1 of the plant Arabidopsis thaliana.</title>
        <authorList>
            <person name="Theologis A."/>
            <person name="Ecker J.R."/>
            <person name="Palm C.J."/>
            <person name="Federspiel N.A."/>
            <person name="Kaul S."/>
            <person name="White O."/>
            <person name="Alonso J."/>
            <person name="Altafi H."/>
            <person name="Araujo R."/>
            <person name="Bowman C.L."/>
            <person name="Brooks S.Y."/>
            <person name="Buehler E."/>
            <person name="Chan A."/>
            <person name="Chao Q."/>
            <person name="Chen H."/>
            <person name="Cheuk R.F."/>
            <person name="Chin C.W."/>
            <person name="Chung M.K."/>
            <person name="Conn L."/>
            <person name="Conway A.B."/>
            <person name="Conway A.R."/>
            <person name="Creasy T.H."/>
            <person name="Dewar K."/>
            <person name="Dunn P."/>
            <person name="Etgu P."/>
            <person name="Feldblyum T.V."/>
            <person name="Feng J.-D."/>
            <person name="Fong B."/>
            <person name="Fujii C.Y."/>
            <person name="Gill J.E."/>
            <person name="Goldsmith A.D."/>
            <person name="Haas B."/>
            <person name="Hansen N.F."/>
            <person name="Hughes B."/>
            <person name="Huizar L."/>
            <person name="Hunter J.L."/>
            <person name="Jenkins J."/>
            <person name="Johnson-Hopson C."/>
            <person name="Khan S."/>
            <person name="Khaykin E."/>
            <person name="Kim C.J."/>
            <person name="Koo H.L."/>
            <person name="Kremenetskaia I."/>
            <person name="Kurtz D.B."/>
            <person name="Kwan A."/>
            <person name="Lam B."/>
            <person name="Langin-Hooper S."/>
            <person name="Lee A."/>
            <person name="Lee J.M."/>
            <person name="Lenz C.A."/>
            <person name="Li J.H."/>
            <person name="Li Y.-P."/>
            <person name="Lin X."/>
            <person name="Liu S.X."/>
            <person name="Liu Z.A."/>
            <person name="Luros J.S."/>
            <person name="Maiti R."/>
            <person name="Marziali A."/>
            <person name="Militscher J."/>
            <person name="Miranda M."/>
            <person name="Nguyen M."/>
            <person name="Nierman W.C."/>
            <person name="Osborne B.I."/>
            <person name="Pai G."/>
            <person name="Peterson J."/>
            <person name="Pham P.K."/>
            <person name="Rizzo M."/>
            <person name="Rooney T."/>
            <person name="Rowley D."/>
            <person name="Sakano H."/>
            <person name="Salzberg S.L."/>
            <person name="Schwartz J.R."/>
            <person name="Shinn P."/>
            <person name="Southwick A.M."/>
            <person name="Sun H."/>
            <person name="Tallon L.J."/>
            <person name="Tambunga G."/>
            <person name="Toriumi M.J."/>
            <person name="Town C.D."/>
            <person name="Utterback T."/>
            <person name="Van Aken S."/>
            <person name="Vaysberg M."/>
            <person name="Vysotskaia V.S."/>
            <person name="Walker M."/>
            <person name="Wu D."/>
            <person name="Yu G."/>
            <person name="Fraser C.M."/>
            <person name="Venter J.C."/>
            <person name="Davis R.W."/>
        </authorList>
    </citation>
    <scope>NUCLEOTIDE SEQUENCE [LARGE SCALE GENOMIC DNA]</scope>
    <source>
        <strain>cv. Columbia</strain>
    </source>
</reference>
<reference key="2">
    <citation type="journal article" date="2017" name="Plant J.">
        <title>Araport11: a complete reannotation of the Arabidopsis thaliana reference genome.</title>
        <authorList>
            <person name="Cheng C.Y."/>
            <person name="Krishnakumar V."/>
            <person name="Chan A.P."/>
            <person name="Thibaud-Nissen F."/>
            <person name="Schobel S."/>
            <person name="Town C.D."/>
        </authorList>
    </citation>
    <scope>GENOME REANNOTATION</scope>
    <source>
        <strain>cv. Columbia</strain>
    </source>
</reference>
<reference key="3">
    <citation type="journal article" date="2004" name="Genome Res.">
        <title>Whole genome sequence comparisons and 'full-length' cDNA sequences: a combined approach to evaluate and improve Arabidopsis genome annotation.</title>
        <authorList>
            <person name="Castelli V."/>
            <person name="Aury J.-M."/>
            <person name="Jaillon O."/>
            <person name="Wincker P."/>
            <person name="Clepet C."/>
            <person name="Menard M."/>
            <person name="Cruaud C."/>
            <person name="Quetier F."/>
            <person name="Scarpelli C."/>
            <person name="Schaechter V."/>
            <person name="Temple G."/>
            <person name="Caboche M."/>
            <person name="Weissenbach J."/>
            <person name="Salanoubat M."/>
        </authorList>
    </citation>
    <scope>NUCLEOTIDE SEQUENCE [LARGE SCALE MRNA]</scope>
    <source>
        <strain>cv. Columbia</strain>
    </source>
</reference>
<feature type="chain" id="PRO_0000421319" description="WAT1-related protein At1g70260">
    <location>
        <begin position="1"/>
        <end position="375"/>
    </location>
</feature>
<feature type="transmembrane region" description="Helical" evidence="2">
    <location>
        <begin position="10"/>
        <end position="30"/>
    </location>
</feature>
<feature type="transmembrane region" description="Helical" evidence="2">
    <location>
        <begin position="41"/>
        <end position="61"/>
    </location>
</feature>
<feature type="transmembrane region" description="Helical" evidence="2">
    <location>
        <begin position="72"/>
        <end position="92"/>
    </location>
</feature>
<feature type="transmembrane region" description="Helical" evidence="2">
    <location>
        <begin position="106"/>
        <end position="126"/>
    </location>
</feature>
<feature type="transmembrane region" description="Helical" evidence="2">
    <location>
        <begin position="143"/>
        <end position="163"/>
    </location>
</feature>
<feature type="transmembrane region" description="Helical" evidence="2">
    <location>
        <begin position="191"/>
        <end position="211"/>
    </location>
</feature>
<feature type="transmembrane region" description="Helical" evidence="2">
    <location>
        <begin position="225"/>
        <end position="245"/>
    </location>
</feature>
<feature type="transmembrane region" description="Helical" evidence="2">
    <location>
        <begin position="259"/>
        <end position="278"/>
    </location>
</feature>
<feature type="transmembrane region" description="Helical" evidence="2">
    <location>
        <begin position="289"/>
        <end position="309"/>
    </location>
</feature>
<feature type="transmembrane region" description="Helical" evidence="2">
    <location>
        <begin position="312"/>
        <end position="332"/>
    </location>
</feature>
<feature type="domain" description="EamA">
    <location>
        <begin position="25"/>
        <end position="134"/>
    </location>
</feature>
<feature type="region of interest" description="Disordered" evidence="3">
    <location>
        <begin position="337"/>
        <end position="356"/>
    </location>
</feature>
<feature type="sequence conflict" description="In Ref. 3; BX815890." evidence="4" ref="3">
    <original>A</original>
    <variation>S</variation>
    <location>
        <position position="110"/>
    </location>
</feature>
<feature type="sequence conflict" description="In Ref. 3; BX815890." evidence="4" ref="3">
    <original>P</original>
    <variation>R</variation>
    <location>
        <position position="116"/>
    </location>
</feature>
<feature type="sequence conflict" description="In Ref. 3; BX815890." evidence="4" ref="3">
    <original>F</original>
    <variation>L</variation>
    <location>
        <position position="208"/>
    </location>
</feature>
<feature type="sequence conflict" description="In Ref. 3; BX815890." evidence="4" ref="3">
    <original>Y</original>
    <variation>N</variation>
    <location>
        <position position="229"/>
    </location>
</feature>
<feature type="sequence conflict" description="In Ref. 3; BX815890." evidence="4" ref="3">
    <original>T</original>
    <variation>K</variation>
    <location>
        <position position="301"/>
    </location>
</feature>
<keyword id="KW-0472">Membrane</keyword>
<keyword id="KW-1185">Reference proteome</keyword>
<keyword id="KW-0812">Transmembrane</keyword>
<keyword id="KW-1133">Transmembrane helix</keyword>
<dbReference type="EMBL" id="AC002062">
    <property type="protein sequence ID" value="AAB61090.1"/>
    <property type="status" value="ALT_SEQ"/>
    <property type="molecule type" value="Genomic_DNA"/>
</dbReference>
<dbReference type="EMBL" id="AC002062">
    <property type="protein sequence ID" value="AAB61091.1"/>
    <property type="status" value="ALT_SEQ"/>
    <property type="molecule type" value="Genomic_DNA"/>
</dbReference>
<dbReference type="EMBL" id="CP002684">
    <property type="protein sequence ID" value="AEE35038.1"/>
    <property type="molecule type" value="Genomic_DNA"/>
</dbReference>
<dbReference type="EMBL" id="BX815890">
    <property type="status" value="NOT_ANNOTATED_CDS"/>
    <property type="molecule type" value="mRNA"/>
</dbReference>
<dbReference type="PIR" id="F96725">
    <property type="entry name" value="F96725"/>
</dbReference>
<dbReference type="PIR" id="G96725">
    <property type="entry name" value="G96725"/>
</dbReference>
<dbReference type="RefSeq" id="NP_177183.2">
    <property type="nucleotide sequence ID" value="NM_105694.3"/>
</dbReference>
<dbReference type="STRING" id="3702.F4I5D5"/>
<dbReference type="TCDB" id="2.A.7.4.7">
    <property type="family name" value="the drug/metabolite transporter (dmt) superfamily"/>
</dbReference>
<dbReference type="PaxDb" id="3702-AT1G70260.1"/>
<dbReference type="EnsemblPlants" id="AT1G70260.1">
    <property type="protein sequence ID" value="AT1G70260.1"/>
    <property type="gene ID" value="AT1G70260"/>
</dbReference>
<dbReference type="GeneID" id="843362"/>
<dbReference type="Gramene" id="AT1G70260.1">
    <property type="protein sequence ID" value="AT1G70260.1"/>
    <property type="gene ID" value="AT1G70260"/>
</dbReference>
<dbReference type="KEGG" id="ath:AT1G70260"/>
<dbReference type="Araport" id="AT1G70260"/>
<dbReference type="TAIR" id="AT1G70260">
    <property type="gene designation" value="UMAMIT36"/>
</dbReference>
<dbReference type="eggNOG" id="ENOG502QW2M">
    <property type="taxonomic scope" value="Eukaryota"/>
</dbReference>
<dbReference type="HOGENOM" id="CLU_025359_0_1_1"/>
<dbReference type="InParanoid" id="F4I5D5"/>
<dbReference type="OMA" id="MVIMEGC"/>
<dbReference type="OrthoDB" id="1733956at2759"/>
<dbReference type="PRO" id="PR:F4I5D5"/>
<dbReference type="Proteomes" id="UP000006548">
    <property type="component" value="Chromosome 1"/>
</dbReference>
<dbReference type="ExpressionAtlas" id="F4I5D5">
    <property type="expression patterns" value="baseline and differential"/>
</dbReference>
<dbReference type="GO" id="GO:0005783">
    <property type="term" value="C:endoplasmic reticulum"/>
    <property type="evidence" value="ECO:0000314"/>
    <property type="project" value="TAIR"/>
</dbReference>
<dbReference type="GO" id="GO:0016020">
    <property type="term" value="C:membrane"/>
    <property type="evidence" value="ECO:0007669"/>
    <property type="project" value="UniProtKB-SubCell"/>
</dbReference>
<dbReference type="GO" id="GO:0022857">
    <property type="term" value="F:transmembrane transporter activity"/>
    <property type="evidence" value="ECO:0007669"/>
    <property type="project" value="InterPro"/>
</dbReference>
<dbReference type="GO" id="GO:1900425">
    <property type="term" value="P:negative regulation of defense response to bacterium"/>
    <property type="evidence" value="ECO:0000315"/>
    <property type="project" value="TAIR"/>
</dbReference>
<dbReference type="GO" id="GO:1902289">
    <property type="term" value="P:negative regulation of defense response to oomycetes"/>
    <property type="evidence" value="ECO:0000315"/>
    <property type="project" value="TAIR"/>
</dbReference>
<dbReference type="GO" id="GO:1900150">
    <property type="term" value="P:regulation of defense response to fungus"/>
    <property type="evidence" value="ECO:0000315"/>
    <property type="project" value="TAIR"/>
</dbReference>
<dbReference type="InterPro" id="IPR000620">
    <property type="entry name" value="EamA_dom"/>
</dbReference>
<dbReference type="InterPro" id="IPR030184">
    <property type="entry name" value="WAT1-related"/>
</dbReference>
<dbReference type="PANTHER" id="PTHR31218">
    <property type="entry name" value="WAT1-RELATED PROTEIN"/>
    <property type="match status" value="1"/>
</dbReference>
<dbReference type="Pfam" id="PF00892">
    <property type="entry name" value="EamA"/>
    <property type="match status" value="1"/>
</dbReference>
<dbReference type="SUPFAM" id="SSF103481">
    <property type="entry name" value="Multidrug resistance efflux transporter EmrE"/>
    <property type="match status" value="1"/>
</dbReference>
<proteinExistence type="evidence at transcript level"/>
<accession>F4I5D5</accession>
<accession>O04519</accession>
<accession>O04520</accession>
<sequence>MEVKVRRDELVPFVAMAIMEACTIALTIMAKTALTGGMSPFVFVVYTNAFGSILLLPFSFLFHRNERTEQSIFSWPLLVRVFFLGFTGIFMFQNLAFVGLRFSSPIVVCAMGLQIPSFSFLLSIILGRSKLDWRNTSTRAKLMGTIVSLSGAFVEELYKGPFIRPASSASPNRFLKSVPKLLVYYNLPDNWFLGCIFLAVAVFSVSLFNVVQTGTVKKYPHVMKVASFYSIVGTIQCLLFSLFMERDLSAWKIQPNFDLYLIIATGTFGSVIRTSVHVKCTQMKGPYYVPLFKPFGIFWATLFGTSFFVNSLHYGSVLGAAIAGVGYFTVSWGQLKESEEKQSSNEERKSIKTIHHRDEDEYKVPLLINQEESPV</sequence>